<protein>
    <recommendedName>
        <fullName>Gene 65 protein</fullName>
    </recommendedName>
    <alternativeName>
        <fullName>Gp65</fullName>
    </alternativeName>
</protein>
<organismHost>
    <name type="scientific">Mycobacterium</name>
    <dbReference type="NCBI Taxonomy" id="1763"/>
</organismHost>
<organism>
    <name type="scientific">Mycobacterium phage L5</name>
    <name type="common">Mycobacteriophage L5</name>
    <dbReference type="NCBI Taxonomy" id="31757"/>
    <lineage>
        <taxon>Viruses</taxon>
        <taxon>Duplodnaviria</taxon>
        <taxon>Heunggongvirae</taxon>
        <taxon>Uroviricota</taxon>
        <taxon>Caudoviricetes</taxon>
        <taxon>Fromanvirus</taxon>
    </lineage>
</organism>
<proteinExistence type="predicted"/>
<accession>Q05279</accession>
<sequence>MYTPRQSLYIRGSAGDPLPPVWAALDQKGTHLRRGQLVLVCAGPGTGKSAFVLAYALKSKVPTLYFSADSDAFTQLSRSVSILSGWSLERATRAVREQNIEDAVADSLDEIPIRFNYKASPSLDEIENALAAYDALYEDFPALIVVDNITNVRTDSSEGDDPFSGLESLMDYLHEMGRETGSCVVGLHHVTGPHNDGDKPIPLSGIKGQIGRVPEMILTLHRVSDGFGPDMLNVSTVKNRGGKSDPSGQDFASLEFVGDTMQINDFGH</sequence>
<keyword id="KW-0067">ATP-binding</keyword>
<keyword id="KW-0547">Nucleotide-binding</keyword>
<keyword id="KW-1185">Reference proteome</keyword>
<dbReference type="EMBL" id="Z18946">
    <property type="protein sequence ID" value="CAA79441.1"/>
    <property type="molecule type" value="Genomic_DNA"/>
</dbReference>
<dbReference type="PIR" id="S31010">
    <property type="entry name" value="S31010"/>
</dbReference>
<dbReference type="RefSeq" id="NP_039729.1">
    <property type="nucleotide sequence ID" value="NC_001335.1"/>
</dbReference>
<dbReference type="SMR" id="Q05279"/>
<dbReference type="GeneID" id="2942908"/>
<dbReference type="KEGG" id="vg:2942908"/>
<dbReference type="OrthoDB" id="5532at10239"/>
<dbReference type="Proteomes" id="UP000002123">
    <property type="component" value="Genome"/>
</dbReference>
<dbReference type="GO" id="GO:0005524">
    <property type="term" value="F:ATP binding"/>
    <property type="evidence" value="ECO:0007669"/>
    <property type="project" value="UniProtKB-KW"/>
</dbReference>
<dbReference type="GO" id="GO:0016887">
    <property type="term" value="F:ATP hydrolysis activity"/>
    <property type="evidence" value="ECO:0007669"/>
    <property type="project" value="InterPro"/>
</dbReference>
<dbReference type="GO" id="GO:0003678">
    <property type="term" value="F:DNA helicase activity"/>
    <property type="evidence" value="ECO:0007669"/>
    <property type="project" value="InterPro"/>
</dbReference>
<dbReference type="GO" id="GO:0006260">
    <property type="term" value="P:DNA replication"/>
    <property type="evidence" value="ECO:0007669"/>
    <property type="project" value="InterPro"/>
</dbReference>
<dbReference type="Gene3D" id="3.40.50.300">
    <property type="entry name" value="P-loop containing nucleotide triphosphate hydrolases"/>
    <property type="match status" value="1"/>
</dbReference>
<dbReference type="InterPro" id="IPR003593">
    <property type="entry name" value="AAA+_ATPase"/>
</dbReference>
<dbReference type="InterPro" id="IPR007694">
    <property type="entry name" value="DNA_helicase_DnaB-like_C"/>
</dbReference>
<dbReference type="InterPro" id="IPR027417">
    <property type="entry name" value="P-loop_NTPase"/>
</dbReference>
<dbReference type="Pfam" id="PF03796">
    <property type="entry name" value="DnaB_C"/>
    <property type="match status" value="1"/>
</dbReference>
<dbReference type="SMART" id="SM00382">
    <property type="entry name" value="AAA"/>
    <property type="match status" value="1"/>
</dbReference>
<dbReference type="SUPFAM" id="SSF52540">
    <property type="entry name" value="P-loop containing nucleoside triphosphate hydrolases"/>
    <property type="match status" value="1"/>
</dbReference>
<reference key="1">
    <citation type="journal article" date="1993" name="Mol. Microbiol.">
        <title>DNA sequence, structure and gene expression of mycobacteriophage L5: a phage system for mycobacterial genetics.</title>
        <authorList>
            <person name="Hatfull G.F."/>
            <person name="Sarkis G.J."/>
        </authorList>
    </citation>
    <scope>NUCLEOTIDE SEQUENCE [LARGE SCALE GENOMIC DNA]</scope>
</reference>
<feature type="chain" id="PRO_0000164804" description="Gene 65 protein">
    <location>
        <begin position="1"/>
        <end position="268"/>
    </location>
</feature>
<gene>
    <name type="primary">65</name>
</gene>
<name>VG65_BPML5</name>